<evidence type="ECO:0000255" key="1">
    <source>
        <dbReference type="HAMAP-Rule" id="MF_00549"/>
    </source>
</evidence>
<accession>Q9KLN2</accession>
<name>MGSA_VIBCH</name>
<keyword id="KW-0456">Lyase</keyword>
<keyword id="KW-1185">Reference proteome</keyword>
<comment type="function">
    <text evidence="1">Catalyzes the formation of methylglyoxal from dihydroxyacetone phosphate.</text>
</comment>
<comment type="catalytic activity">
    <reaction evidence="1">
        <text>dihydroxyacetone phosphate = methylglyoxal + phosphate</text>
        <dbReference type="Rhea" id="RHEA:17937"/>
        <dbReference type="ChEBI" id="CHEBI:17158"/>
        <dbReference type="ChEBI" id="CHEBI:43474"/>
        <dbReference type="ChEBI" id="CHEBI:57642"/>
        <dbReference type="EC" id="4.2.3.3"/>
    </reaction>
</comment>
<comment type="similarity">
    <text evidence="1">Belongs to the methylglyoxal synthase family.</text>
</comment>
<dbReference type="EC" id="4.2.3.3" evidence="1"/>
<dbReference type="EMBL" id="AE003853">
    <property type="protein sequence ID" value="AAF96610.1"/>
    <property type="molecule type" value="Genomic_DNA"/>
</dbReference>
<dbReference type="PIR" id="D82427">
    <property type="entry name" value="D82427"/>
</dbReference>
<dbReference type="RefSeq" id="NP_233098.1">
    <property type="nucleotide sequence ID" value="NC_002506.1"/>
</dbReference>
<dbReference type="RefSeq" id="WP_000754102.1">
    <property type="nucleotide sequence ID" value="NZ_LT906615.1"/>
</dbReference>
<dbReference type="SMR" id="Q9KLN2"/>
<dbReference type="STRING" id="243277.VC_A0711"/>
<dbReference type="DNASU" id="2612037"/>
<dbReference type="EnsemblBacteria" id="AAF96610">
    <property type="protein sequence ID" value="AAF96610"/>
    <property type="gene ID" value="VC_A0711"/>
</dbReference>
<dbReference type="KEGG" id="vch:VC_A0711"/>
<dbReference type="PATRIC" id="fig|243277.26.peg.3334"/>
<dbReference type="eggNOG" id="COG1803">
    <property type="taxonomic scope" value="Bacteria"/>
</dbReference>
<dbReference type="HOGENOM" id="CLU_120420_0_1_6"/>
<dbReference type="Proteomes" id="UP000000584">
    <property type="component" value="Chromosome 2"/>
</dbReference>
<dbReference type="GO" id="GO:0005829">
    <property type="term" value="C:cytosol"/>
    <property type="evidence" value="ECO:0000318"/>
    <property type="project" value="GO_Central"/>
</dbReference>
<dbReference type="GO" id="GO:0008929">
    <property type="term" value="F:methylglyoxal synthase activity"/>
    <property type="evidence" value="ECO:0000318"/>
    <property type="project" value="GO_Central"/>
</dbReference>
<dbReference type="GO" id="GO:0019242">
    <property type="term" value="P:methylglyoxal biosynthetic process"/>
    <property type="evidence" value="ECO:0000318"/>
    <property type="project" value="GO_Central"/>
</dbReference>
<dbReference type="CDD" id="cd01422">
    <property type="entry name" value="MGS"/>
    <property type="match status" value="1"/>
</dbReference>
<dbReference type="FunFam" id="3.40.50.1380:FF:000002">
    <property type="entry name" value="Methylglyoxal synthase"/>
    <property type="match status" value="1"/>
</dbReference>
<dbReference type="Gene3D" id="3.40.50.1380">
    <property type="entry name" value="Methylglyoxal synthase-like domain"/>
    <property type="match status" value="1"/>
</dbReference>
<dbReference type="HAMAP" id="MF_00549">
    <property type="entry name" value="Methylglyoxal_synth"/>
    <property type="match status" value="1"/>
</dbReference>
<dbReference type="InterPro" id="IPR004363">
    <property type="entry name" value="Methylgl_synth"/>
</dbReference>
<dbReference type="InterPro" id="IPR018148">
    <property type="entry name" value="Methylglyoxal_synth_AS"/>
</dbReference>
<dbReference type="InterPro" id="IPR011607">
    <property type="entry name" value="MGS-like_dom"/>
</dbReference>
<dbReference type="InterPro" id="IPR036914">
    <property type="entry name" value="MGS-like_dom_sf"/>
</dbReference>
<dbReference type="NCBIfam" id="TIGR00160">
    <property type="entry name" value="MGSA"/>
    <property type="match status" value="1"/>
</dbReference>
<dbReference type="NCBIfam" id="NF003559">
    <property type="entry name" value="PRK05234.1"/>
    <property type="match status" value="1"/>
</dbReference>
<dbReference type="PANTHER" id="PTHR30492">
    <property type="entry name" value="METHYLGLYOXAL SYNTHASE"/>
    <property type="match status" value="1"/>
</dbReference>
<dbReference type="PANTHER" id="PTHR30492:SF0">
    <property type="entry name" value="METHYLGLYOXAL SYNTHASE"/>
    <property type="match status" value="1"/>
</dbReference>
<dbReference type="Pfam" id="PF02142">
    <property type="entry name" value="MGS"/>
    <property type="match status" value="1"/>
</dbReference>
<dbReference type="PIRSF" id="PIRSF006614">
    <property type="entry name" value="Methylglyox_syn"/>
    <property type="match status" value="1"/>
</dbReference>
<dbReference type="SMART" id="SM00851">
    <property type="entry name" value="MGS"/>
    <property type="match status" value="1"/>
</dbReference>
<dbReference type="SUPFAM" id="SSF52335">
    <property type="entry name" value="Methylglyoxal synthase-like"/>
    <property type="match status" value="1"/>
</dbReference>
<dbReference type="PROSITE" id="PS01335">
    <property type="entry name" value="METHYLGLYOXAL_SYNTH"/>
    <property type="match status" value="1"/>
</dbReference>
<dbReference type="PROSITE" id="PS51855">
    <property type="entry name" value="MGS"/>
    <property type="match status" value="1"/>
</dbReference>
<proteinExistence type="inferred from homology"/>
<organism>
    <name type="scientific">Vibrio cholerae serotype O1 (strain ATCC 39315 / El Tor Inaba N16961)</name>
    <dbReference type="NCBI Taxonomy" id="243277"/>
    <lineage>
        <taxon>Bacteria</taxon>
        <taxon>Pseudomonadati</taxon>
        <taxon>Pseudomonadota</taxon>
        <taxon>Gammaproteobacteria</taxon>
        <taxon>Vibrionales</taxon>
        <taxon>Vibrionaceae</taxon>
        <taxon>Vibrio</taxon>
    </lineage>
</organism>
<feature type="chain" id="PRO_0000178652" description="Methylglyoxal synthase">
    <location>
        <begin position="1"/>
        <end position="151"/>
    </location>
</feature>
<feature type="domain" description="MGS-like" evidence="1">
    <location>
        <begin position="1"/>
        <end position="151"/>
    </location>
</feature>
<feature type="active site" description="Proton donor/acceptor" evidence="1">
    <location>
        <position position="71"/>
    </location>
</feature>
<feature type="binding site" evidence="1">
    <location>
        <position position="19"/>
    </location>
    <ligand>
        <name>substrate</name>
    </ligand>
</feature>
<feature type="binding site" evidence="1">
    <location>
        <position position="23"/>
    </location>
    <ligand>
        <name>substrate</name>
    </ligand>
</feature>
<feature type="binding site" evidence="1">
    <location>
        <begin position="45"/>
        <end position="48"/>
    </location>
    <ligand>
        <name>substrate</name>
    </ligand>
</feature>
<feature type="binding site" evidence="1">
    <location>
        <begin position="65"/>
        <end position="66"/>
    </location>
    <ligand>
        <name>substrate</name>
    </ligand>
</feature>
<feature type="binding site" evidence="1">
    <location>
        <position position="98"/>
    </location>
    <ligand>
        <name>substrate</name>
    </ligand>
</feature>
<gene>
    <name evidence="1" type="primary">mgsA</name>
    <name type="ordered locus">VC_A0711</name>
</gene>
<sequence length="151" mass="16847">MKKTTRTMAAHKHVALVAHDNCKGELLRWVTENKEKLQRHFLYATGTTGHMLSKETGLAIKSMISGPMGGDQQLGALISEGKIDVLIFFWDPLNAVPHDPDVKALLRIASVWNIPVATNRASAKFLFSSSLMEQEVQIEIPDYQAYLAERT</sequence>
<protein>
    <recommendedName>
        <fullName evidence="1">Methylglyoxal synthase</fullName>
        <shortName evidence="1">MGS</shortName>
        <ecNumber evidence="1">4.2.3.3</ecNumber>
    </recommendedName>
</protein>
<reference key="1">
    <citation type="journal article" date="2000" name="Nature">
        <title>DNA sequence of both chromosomes of the cholera pathogen Vibrio cholerae.</title>
        <authorList>
            <person name="Heidelberg J.F."/>
            <person name="Eisen J.A."/>
            <person name="Nelson W.C."/>
            <person name="Clayton R.A."/>
            <person name="Gwinn M.L."/>
            <person name="Dodson R.J."/>
            <person name="Haft D.H."/>
            <person name="Hickey E.K."/>
            <person name="Peterson J.D."/>
            <person name="Umayam L.A."/>
            <person name="Gill S.R."/>
            <person name="Nelson K.E."/>
            <person name="Read T.D."/>
            <person name="Tettelin H."/>
            <person name="Richardson D.L."/>
            <person name="Ermolaeva M.D."/>
            <person name="Vamathevan J.J."/>
            <person name="Bass S."/>
            <person name="Qin H."/>
            <person name="Dragoi I."/>
            <person name="Sellers P."/>
            <person name="McDonald L.A."/>
            <person name="Utterback T.R."/>
            <person name="Fleischmann R.D."/>
            <person name="Nierman W.C."/>
            <person name="White O."/>
            <person name="Salzberg S.L."/>
            <person name="Smith H.O."/>
            <person name="Colwell R.R."/>
            <person name="Mekalanos J.J."/>
            <person name="Venter J.C."/>
            <person name="Fraser C.M."/>
        </authorList>
    </citation>
    <scope>NUCLEOTIDE SEQUENCE [LARGE SCALE GENOMIC DNA]</scope>
    <source>
        <strain>ATCC 39315 / El Tor Inaba N16961</strain>
    </source>
</reference>